<name>IGFL4_HUMAN</name>
<dbReference type="EMBL" id="AY672114">
    <property type="protein sequence ID" value="AAT77788.1"/>
    <property type="molecule type" value="mRNA"/>
</dbReference>
<dbReference type="EMBL" id="AC007785">
    <property type="status" value="NOT_ANNOTATED_CDS"/>
    <property type="molecule type" value="Genomic_DNA"/>
</dbReference>
<dbReference type="CCDS" id="CCDS33057.1"/>
<dbReference type="RefSeq" id="NP_001002923.1">
    <property type="nucleotide sequence ID" value="NM_001002923.3"/>
</dbReference>
<dbReference type="RefSeq" id="XP_047294807.1">
    <property type="nucleotide sequence ID" value="XM_047438851.1"/>
</dbReference>
<dbReference type="RefSeq" id="XP_054177028.1">
    <property type="nucleotide sequence ID" value="XM_054321053.1"/>
</dbReference>
<dbReference type="BioGRID" id="138634">
    <property type="interactions" value="1"/>
</dbReference>
<dbReference type="FunCoup" id="Q6B9Z1">
    <property type="interactions" value="30"/>
</dbReference>
<dbReference type="STRING" id="9606.ENSP00000366926"/>
<dbReference type="GlyCosmos" id="Q6B9Z1">
    <property type="glycosylation" value="2 sites, No reported glycans"/>
</dbReference>
<dbReference type="GlyGen" id="Q6B9Z1">
    <property type="glycosylation" value="2 sites"/>
</dbReference>
<dbReference type="BioMuta" id="IGFL4"/>
<dbReference type="DMDM" id="74709209"/>
<dbReference type="PaxDb" id="9606-ENSP00000366926"/>
<dbReference type="PeptideAtlas" id="Q6B9Z1"/>
<dbReference type="Antibodypedia" id="62140">
    <property type="antibodies" value="39 antibodies from 12 providers"/>
</dbReference>
<dbReference type="DNASU" id="444882"/>
<dbReference type="Ensembl" id="ENST00000377697.2">
    <property type="protein sequence ID" value="ENSP00000366926.1"/>
    <property type="gene ID" value="ENSG00000204869.9"/>
</dbReference>
<dbReference type="GeneID" id="444882"/>
<dbReference type="KEGG" id="hsa:444882"/>
<dbReference type="MANE-Select" id="ENST00000377697.2">
    <property type="protein sequence ID" value="ENSP00000366926.1"/>
    <property type="RefSeq nucleotide sequence ID" value="NM_001002923.3"/>
    <property type="RefSeq protein sequence ID" value="NP_001002923.1"/>
</dbReference>
<dbReference type="UCSC" id="uc002pdy.1">
    <property type="organism name" value="human"/>
</dbReference>
<dbReference type="AGR" id="HGNC:32931"/>
<dbReference type="CTD" id="444882"/>
<dbReference type="GeneCards" id="IGFL4"/>
<dbReference type="HGNC" id="HGNC:32931">
    <property type="gene designation" value="IGFL4"/>
</dbReference>
<dbReference type="HPA" id="ENSG00000204869">
    <property type="expression patterns" value="Group enriched (retina, skin)"/>
</dbReference>
<dbReference type="MIM" id="610547">
    <property type="type" value="gene"/>
</dbReference>
<dbReference type="neXtProt" id="NX_Q6B9Z1"/>
<dbReference type="OpenTargets" id="ENSG00000204869"/>
<dbReference type="PharmGKB" id="PA147357961"/>
<dbReference type="VEuPathDB" id="HostDB:ENSG00000204869"/>
<dbReference type="eggNOG" id="ENOG502TJ2N">
    <property type="taxonomic scope" value="Eukaryota"/>
</dbReference>
<dbReference type="GeneTree" id="ENSGT00390000009557"/>
<dbReference type="HOGENOM" id="CLU_148773_0_0_1"/>
<dbReference type="InParanoid" id="Q6B9Z1"/>
<dbReference type="OMA" id="QTRLCGP"/>
<dbReference type="OrthoDB" id="9756650at2759"/>
<dbReference type="PAN-GO" id="Q6B9Z1">
    <property type="GO annotations" value="2 GO annotations based on evolutionary models"/>
</dbReference>
<dbReference type="PhylomeDB" id="Q6B9Z1"/>
<dbReference type="TreeFam" id="TF343427"/>
<dbReference type="PathwayCommons" id="Q6B9Z1"/>
<dbReference type="SignaLink" id="Q6B9Z1"/>
<dbReference type="BioGRID-ORCS" id="444882">
    <property type="hits" value="11 hits in 1136 CRISPR screens"/>
</dbReference>
<dbReference type="GenomeRNAi" id="444882"/>
<dbReference type="Pharos" id="Q6B9Z1">
    <property type="development level" value="Tdark"/>
</dbReference>
<dbReference type="PRO" id="PR:Q6B9Z1"/>
<dbReference type="Proteomes" id="UP000005640">
    <property type="component" value="Chromosome 19"/>
</dbReference>
<dbReference type="RNAct" id="Q6B9Z1">
    <property type="molecule type" value="protein"/>
</dbReference>
<dbReference type="Bgee" id="ENSG00000204869">
    <property type="expression patterns" value="Expressed in primary visual cortex and 90 other cell types or tissues"/>
</dbReference>
<dbReference type="ExpressionAtlas" id="Q6B9Z1">
    <property type="expression patterns" value="baseline and differential"/>
</dbReference>
<dbReference type="GO" id="GO:0005615">
    <property type="term" value="C:extracellular space"/>
    <property type="evidence" value="ECO:0000318"/>
    <property type="project" value="GO_Central"/>
</dbReference>
<dbReference type="GO" id="GO:0005102">
    <property type="term" value="F:signaling receptor binding"/>
    <property type="evidence" value="ECO:0000318"/>
    <property type="project" value="GO_Central"/>
</dbReference>
<dbReference type="InterPro" id="IPR032744">
    <property type="entry name" value="IGFL"/>
</dbReference>
<dbReference type="PANTHER" id="PTHR34827">
    <property type="entry name" value="INSULIN GROWTH FACTOR-LIKE FAMILY MEMBER 3-RELATED"/>
    <property type="match status" value="1"/>
</dbReference>
<dbReference type="PANTHER" id="PTHR34827:SF1">
    <property type="entry name" value="INSULIN GROWTH FACTOR-LIKE FAMILY MEMBER 4"/>
    <property type="match status" value="1"/>
</dbReference>
<dbReference type="Pfam" id="PF14653">
    <property type="entry name" value="IGFL"/>
    <property type="match status" value="1"/>
</dbReference>
<protein>
    <recommendedName>
        <fullName>Insulin growth factor-like family member 4</fullName>
    </recommendedName>
</protein>
<keyword id="KW-0325">Glycoprotein</keyword>
<keyword id="KW-1185">Reference proteome</keyword>
<keyword id="KW-0964">Secreted</keyword>
<keyword id="KW-0732">Signal</keyword>
<comment type="subcellular location">
    <subcellularLocation>
        <location evidence="3">Secreted</location>
    </subcellularLocation>
</comment>
<comment type="tissue specificity">
    <text evidence="2">Detected in the cerebellum.</text>
</comment>
<comment type="similarity">
    <text evidence="3">Belongs to the IGFL family.</text>
</comment>
<reference key="1">
    <citation type="journal article" date="2006" name="Genomics">
        <title>IGFL: a secreted family with conserved cysteine residues and similarities to the IGF superfamily.</title>
        <authorList>
            <person name="Emtage P."/>
            <person name="Vatta P."/>
            <person name="Arterburn M."/>
            <person name="Muller M.W."/>
            <person name="Park E."/>
            <person name="Boyle B."/>
            <person name="Hazell S."/>
            <person name="Polizotto R."/>
            <person name="Funk W.D."/>
            <person name="Tang Y.T."/>
        </authorList>
    </citation>
    <scope>NUCLEOTIDE SEQUENCE [MRNA]</scope>
    <scope>TISSUE SPECIFICITY</scope>
</reference>
<reference key="2">
    <citation type="journal article" date="2004" name="Nature">
        <title>The DNA sequence and biology of human chromosome 19.</title>
        <authorList>
            <person name="Grimwood J."/>
            <person name="Gordon L.A."/>
            <person name="Olsen A.S."/>
            <person name="Terry A."/>
            <person name="Schmutz J."/>
            <person name="Lamerdin J.E."/>
            <person name="Hellsten U."/>
            <person name="Goodstein D."/>
            <person name="Couronne O."/>
            <person name="Tran-Gyamfi M."/>
            <person name="Aerts A."/>
            <person name="Altherr M."/>
            <person name="Ashworth L."/>
            <person name="Bajorek E."/>
            <person name="Black S."/>
            <person name="Branscomb E."/>
            <person name="Caenepeel S."/>
            <person name="Carrano A.V."/>
            <person name="Caoile C."/>
            <person name="Chan Y.M."/>
            <person name="Christensen M."/>
            <person name="Cleland C.A."/>
            <person name="Copeland A."/>
            <person name="Dalin E."/>
            <person name="Dehal P."/>
            <person name="Denys M."/>
            <person name="Detter J.C."/>
            <person name="Escobar J."/>
            <person name="Flowers D."/>
            <person name="Fotopulos D."/>
            <person name="Garcia C."/>
            <person name="Georgescu A.M."/>
            <person name="Glavina T."/>
            <person name="Gomez M."/>
            <person name="Gonzales E."/>
            <person name="Groza M."/>
            <person name="Hammon N."/>
            <person name="Hawkins T."/>
            <person name="Haydu L."/>
            <person name="Ho I."/>
            <person name="Huang W."/>
            <person name="Israni S."/>
            <person name="Jett J."/>
            <person name="Kadner K."/>
            <person name="Kimball H."/>
            <person name="Kobayashi A."/>
            <person name="Larionov V."/>
            <person name="Leem S.-H."/>
            <person name="Lopez F."/>
            <person name="Lou Y."/>
            <person name="Lowry S."/>
            <person name="Malfatti S."/>
            <person name="Martinez D."/>
            <person name="McCready P.M."/>
            <person name="Medina C."/>
            <person name="Morgan J."/>
            <person name="Nelson K."/>
            <person name="Nolan M."/>
            <person name="Ovcharenko I."/>
            <person name="Pitluck S."/>
            <person name="Pollard M."/>
            <person name="Popkie A.P."/>
            <person name="Predki P."/>
            <person name="Quan G."/>
            <person name="Ramirez L."/>
            <person name="Rash S."/>
            <person name="Retterer J."/>
            <person name="Rodriguez A."/>
            <person name="Rogers S."/>
            <person name="Salamov A."/>
            <person name="Salazar A."/>
            <person name="She X."/>
            <person name="Smith D."/>
            <person name="Slezak T."/>
            <person name="Solovyev V."/>
            <person name="Thayer N."/>
            <person name="Tice H."/>
            <person name="Tsai M."/>
            <person name="Ustaszewska A."/>
            <person name="Vo N."/>
            <person name="Wagner M."/>
            <person name="Wheeler J."/>
            <person name="Wu K."/>
            <person name="Xie G."/>
            <person name="Yang J."/>
            <person name="Dubchak I."/>
            <person name="Furey T.S."/>
            <person name="DeJong P."/>
            <person name="Dickson M."/>
            <person name="Gordon D."/>
            <person name="Eichler E.E."/>
            <person name="Pennacchio L.A."/>
            <person name="Richardson P."/>
            <person name="Stubbs L."/>
            <person name="Rokhsar D.S."/>
            <person name="Myers R.M."/>
            <person name="Rubin E.M."/>
            <person name="Lucas S.M."/>
        </authorList>
    </citation>
    <scope>NUCLEOTIDE SEQUENCE [LARGE SCALE GENOMIC DNA]</scope>
</reference>
<sequence length="124" mass="13885">MVPRISAAIFIFELLGSNSEGVTDLRLWLCQPAPRCGEWTYNPLEQCCDDGVILDLNQTRLCGSSCTFWPCFQHCCLESLGSQNQTVVRFKVPGMKPDCKSSPITRICAQEYHPKSPVSRSDLI</sequence>
<organism>
    <name type="scientific">Homo sapiens</name>
    <name type="common">Human</name>
    <dbReference type="NCBI Taxonomy" id="9606"/>
    <lineage>
        <taxon>Eukaryota</taxon>
        <taxon>Metazoa</taxon>
        <taxon>Chordata</taxon>
        <taxon>Craniata</taxon>
        <taxon>Vertebrata</taxon>
        <taxon>Euteleostomi</taxon>
        <taxon>Mammalia</taxon>
        <taxon>Eutheria</taxon>
        <taxon>Euarchontoglires</taxon>
        <taxon>Primates</taxon>
        <taxon>Haplorrhini</taxon>
        <taxon>Catarrhini</taxon>
        <taxon>Hominidae</taxon>
        <taxon>Homo</taxon>
    </lineage>
</organism>
<feature type="signal peptide" evidence="1">
    <location>
        <begin position="1"/>
        <end position="19"/>
    </location>
</feature>
<feature type="chain" id="PRO_0000045062" description="Insulin growth factor-like family member 4">
    <location>
        <begin position="20"/>
        <end position="124"/>
    </location>
</feature>
<feature type="glycosylation site" description="N-linked (GlcNAc...) asparagine" evidence="1">
    <location>
        <position position="57"/>
    </location>
</feature>
<feature type="glycosylation site" description="N-linked (GlcNAc...) asparagine" evidence="1">
    <location>
        <position position="84"/>
    </location>
</feature>
<feature type="sequence variant" id="VAR_049571" description="In dbSNP:rs10412490.">
    <original>L</original>
    <variation>P</variation>
    <location>
        <position position="25"/>
    </location>
</feature>
<feature type="sequence variant" id="VAR_049572" description="In dbSNP:rs17271272.">
    <original>R</original>
    <variation>Q</variation>
    <location>
        <position position="60"/>
    </location>
</feature>
<evidence type="ECO:0000255" key="1"/>
<evidence type="ECO:0000269" key="2">
    <source>
    </source>
</evidence>
<evidence type="ECO:0000305" key="3"/>
<gene>
    <name type="primary">IGFL4</name>
</gene>
<proteinExistence type="evidence at transcript level"/>
<accession>Q6B9Z1</accession>